<feature type="chain" id="PRO_0000350773" description="Geranylgeranylglyceryl phosphate synthase">
    <location>
        <begin position="1"/>
        <end position="245"/>
    </location>
</feature>
<feature type="binding site" evidence="1">
    <location>
        <position position="22"/>
    </location>
    <ligand>
        <name>Mg(2+)</name>
        <dbReference type="ChEBI" id="CHEBI:18420"/>
    </ligand>
</feature>
<feature type="binding site" evidence="1">
    <location>
        <position position="51"/>
    </location>
    <ligand>
        <name>Mg(2+)</name>
        <dbReference type="ChEBI" id="CHEBI:18420"/>
    </ligand>
</feature>
<feature type="binding site" evidence="1">
    <location>
        <begin position="169"/>
        <end position="175"/>
    </location>
    <ligand>
        <name>sn-glycerol 1-phosphate</name>
        <dbReference type="ChEBI" id="CHEBI:57685"/>
    </ligand>
</feature>
<feature type="binding site" evidence="1">
    <location>
        <begin position="200"/>
        <end position="201"/>
    </location>
    <ligand>
        <name>sn-glycerol 1-phosphate</name>
        <dbReference type="ChEBI" id="CHEBI:57685"/>
    </ligand>
</feature>
<feature type="binding site" evidence="1">
    <location>
        <begin position="222"/>
        <end position="223"/>
    </location>
    <ligand>
        <name>sn-glycerol 1-phosphate</name>
        <dbReference type="ChEBI" id="CHEBI:57685"/>
    </ligand>
</feature>
<feature type="sequence conflict" description="In Ref. 2; AA sequence." evidence="5" ref="2">
    <original>K</original>
    <variation>N</variation>
    <location>
        <position position="149"/>
    </location>
</feature>
<gene>
    <name type="ordered locus">MTBMA_c09410</name>
</gene>
<comment type="function">
    <text evidence="2 3 4">Prenyltransferase that catalyzes the transfer of the geranylgeranyl moiety of geranylgeranyl diphosphate (GGPP) to the C3 hydroxyl of sn-glycerol-1-phosphate (G1P). This reaction is the first ether-bond-formation step in the biosynthesis of archaeal membrane lipids. Cannot use sn-glycerol-3-phosphate (G3P) or dihydroxyacetonephosphate (DHAP) as substrate.</text>
</comment>
<comment type="catalytic activity">
    <reaction evidence="1 2 4">
        <text>sn-glycerol 1-phosphate + (2E,6E,10E)-geranylgeranyl diphosphate = sn-3-O-(geranylgeranyl)glycerol 1-phosphate + diphosphate</text>
        <dbReference type="Rhea" id="RHEA:23404"/>
        <dbReference type="ChEBI" id="CHEBI:33019"/>
        <dbReference type="ChEBI" id="CHEBI:57677"/>
        <dbReference type="ChEBI" id="CHEBI:57685"/>
        <dbReference type="ChEBI" id="CHEBI:58756"/>
        <dbReference type="EC" id="2.5.1.41"/>
    </reaction>
</comment>
<comment type="cofactor">
    <cofactor evidence="1 3 4">
        <name>Mg(2+)</name>
        <dbReference type="ChEBI" id="CHEBI:18420"/>
    </cofactor>
</comment>
<comment type="activity regulation">
    <text evidence="4">Inhibited by EDTA in vitro.</text>
</comment>
<comment type="biophysicochemical properties">
    <kinetics>
        <KM evidence="2">13.5 uM for G1P (at 55 degrees Celsius and pH 8)</KM>
        <KM evidence="2">506 nM for GGPP (at 55 degrees Celsius and pH 8)</KM>
        <Vmax evidence="2">4.0 umol/min/mg enzyme (at 55 degrees Celsius and pH 8)</Vmax>
    </kinetics>
    <phDependence>
        <text evidence="2">Optimum pH is 6.0-9.0.</text>
    </phDependence>
    <temperatureDependence>
        <text evidence="2">Optimum temperature is 55 degrees Celsius at pH 8.0.</text>
    </temperatureDependence>
</comment>
<comment type="pathway">
    <text evidence="1">Membrane lipid metabolism; glycerophospholipid metabolism.</text>
</comment>
<comment type="subunit">
    <text evidence="2">Homopentamer.</text>
</comment>
<comment type="subcellular location">
    <subcellularLocation>
        <location evidence="1 3">Cytoplasm</location>
    </subcellularLocation>
</comment>
<comment type="similarity">
    <text evidence="1">Belongs to the GGGP/HepGP synthase family. Group II subfamily.</text>
</comment>
<organism>
    <name type="scientific">Methanothermobacter marburgensis (strain ATCC BAA-927 / DSM 2133 / JCM 14651 / NBRC 100331 / OCM 82 / Marburg)</name>
    <name type="common">Methanobacterium thermoautotrophicum</name>
    <dbReference type="NCBI Taxonomy" id="79929"/>
    <lineage>
        <taxon>Archaea</taxon>
        <taxon>Methanobacteriati</taxon>
        <taxon>Methanobacteriota</taxon>
        <taxon>Methanomada group</taxon>
        <taxon>Methanobacteria</taxon>
        <taxon>Methanobacteriales</taxon>
        <taxon>Methanobacteriaceae</taxon>
        <taxon>Methanothermobacter</taxon>
    </lineage>
</organism>
<proteinExistence type="evidence at protein level"/>
<keyword id="KW-0963">Cytoplasm</keyword>
<keyword id="KW-0903">Direct protein sequencing</keyword>
<keyword id="KW-0444">Lipid biosynthesis</keyword>
<keyword id="KW-0443">Lipid metabolism</keyword>
<keyword id="KW-0460">Magnesium</keyword>
<keyword id="KW-0479">Metal-binding</keyword>
<keyword id="KW-0594">Phospholipid biosynthesis</keyword>
<keyword id="KW-1208">Phospholipid metabolism</keyword>
<keyword id="KW-0808">Transferase</keyword>
<sequence length="245" mass="25818">MKVEDYFHDILGERKIHLTLIDPEEQTPEEAVEIAEAAIRGGTDGIMLGGSTTDSSELDATAGALRENIDVPIILFPGNTTGVSRHADAIFFMSLLNSNNPYWIIGAQALGAPAVKKMGIEALPMGYLVVEPGGTVGWVGDTKPVPRNKPDIAAAYAMAAEFLGMRLFYLEAGSGAPQHVPEEMISLVKRCTDQILIVGGGIRTGADAARVAGAGADIIVTGTVVENSSNVEDKIREIVEGMGSL</sequence>
<dbReference type="EC" id="2.5.1.41" evidence="1 2 4"/>
<dbReference type="EMBL" id="CP001710">
    <property type="protein sequence ID" value="ADL58536.1"/>
    <property type="molecule type" value="Genomic_DNA"/>
</dbReference>
<dbReference type="RefSeq" id="WP_013295760.1">
    <property type="nucleotide sequence ID" value="NC_014408.1"/>
</dbReference>
<dbReference type="SMR" id="P0C882"/>
<dbReference type="STRING" id="79929.MTBMA_c09410"/>
<dbReference type="PaxDb" id="79929-MTBMA_c09410"/>
<dbReference type="GeneID" id="77399718"/>
<dbReference type="GeneID" id="9704649"/>
<dbReference type="KEGG" id="mmg:MTBMA_c09410"/>
<dbReference type="PATRIC" id="fig|79929.8.peg.920"/>
<dbReference type="HOGENOM" id="CLU_068610_0_0_2"/>
<dbReference type="OrthoDB" id="7409at2157"/>
<dbReference type="SABIO-RK" id="P0C882"/>
<dbReference type="UniPathway" id="UPA00940"/>
<dbReference type="Proteomes" id="UP000000345">
    <property type="component" value="Chromosome"/>
</dbReference>
<dbReference type="GO" id="GO:0005737">
    <property type="term" value="C:cytoplasm"/>
    <property type="evidence" value="ECO:0007669"/>
    <property type="project" value="UniProtKB-SubCell"/>
</dbReference>
<dbReference type="GO" id="GO:0000287">
    <property type="term" value="F:magnesium ion binding"/>
    <property type="evidence" value="ECO:0007669"/>
    <property type="project" value="UniProtKB-UniRule"/>
</dbReference>
<dbReference type="GO" id="GO:0047294">
    <property type="term" value="F:phosphoglycerol geranylgeranyltransferase activity"/>
    <property type="evidence" value="ECO:0007669"/>
    <property type="project" value="UniProtKB-UniRule"/>
</dbReference>
<dbReference type="GO" id="GO:0046474">
    <property type="term" value="P:glycerophospholipid biosynthetic process"/>
    <property type="evidence" value="ECO:0007669"/>
    <property type="project" value="UniProtKB-UniRule"/>
</dbReference>
<dbReference type="CDD" id="cd02812">
    <property type="entry name" value="PcrB_like"/>
    <property type="match status" value="1"/>
</dbReference>
<dbReference type="FunFam" id="3.20.20.390:FF:000001">
    <property type="entry name" value="Heptaprenylglyceryl phosphate synthase"/>
    <property type="match status" value="1"/>
</dbReference>
<dbReference type="Gene3D" id="3.20.20.390">
    <property type="entry name" value="FMN-linked oxidoreductases"/>
    <property type="match status" value="1"/>
</dbReference>
<dbReference type="HAMAP" id="MF_00112">
    <property type="entry name" value="GGGP_HepGP_synthase"/>
    <property type="match status" value="1"/>
</dbReference>
<dbReference type="InterPro" id="IPR039074">
    <property type="entry name" value="GGGP/HepGP_synthase_I"/>
</dbReference>
<dbReference type="InterPro" id="IPR038597">
    <property type="entry name" value="GGGP/HepGP_synthase_sf"/>
</dbReference>
<dbReference type="InterPro" id="IPR008205">
    <property type="entry name" value="GGGP_HepGP_synthase"/>
</dbReference>
<dbReference type="InterPro" id="IPR010946">
    <property type="entry name" value="GGGP_synth"/>
</dbReference>
<dbReference type="NCBIfam" id="TIGR01769">
    <property type="entry name" value="GGGP"/>
    <property type="match status" value="1"/>
</dbReference>
<dbReference type="NCBIfam" id="TIGR01768">
    <property type="entry name" value="GGGP-family"/>
    <property type="match status" value="1"/>
</dbReference>
<dbReference type="NCBIfam" id="NF003198">
    <property type="entry name" value="PRK04169.1-2"/>
    <property type="match status" value="1"/>
</dbReference>
<dbReference type="PANTHER" id="PTHR40029">
    <property type="match status" value="1"/>
</dbReference>
<dbReference type="PANTHER" id="PTHR40029:SF2">
    <property type="entry name" value="HEPTAPRENYLGLYCERYL PHOSPHATE SYNTHASE"/>
    <property type="match status" value="1"/>
</dbReference>
<dbReference type="Pfam" id="PF01884">
    <property type="entry name" value="PcrB"/>
    <property type="match status" value="1"/>
</dbReference>
<dbReference type="SUPFAM" id="SSF51395">
    <property type="entry name" value="FMN-linked oxidoreductases"/>
    <property type="match status" value="1"/>
</dbReference>
<reference key="1">
    <citation type="journal article" date="2010" name="J. Bacteriol.">
        <title>Complete genome sequence of Methanothermobacter marburgensis, a methanoarchaeon model organism.</title>
        <authorList>
            <person name="Liesegang H."/>
            <person name="Kaster A.K."/>
            <person name="Wiezer A."/>
            <person name="Goenrich M."/>
            <person name="Wollherr A."/>
            <person name="Seedorf H."/>
            <person name="Gottschalk G."/>
            <person name="Thauer R.K."/>
        </authorList>
    </citation>
    <scope>NUCLEOTIDE SEQUENCE [LARGE SCALE GENOMIC DNA]</scope>
    <source>
        <strain>ATCC BAA-927 / DSM 2133 / JCM 14651 / NBRC 100331 / OCM 82 / Marburg</strain>
    </source>
</reference>
<reference key="2">
    <citation type="journal article" date="2001" name="Biochemistry">
        <title>Geranylgeranylglyceryl phosphate synthase. Characterization of the recombinant enzyme from Methanobacterium thermoautotrophicum.</title>
        <authorList>
            <person name="Soderberg T."/>
            <person name="Chen A."/>
            <person name="Poulter C.D."/>
        </authorList>
    </citation>
    <scope>PROTEIN SEQUENCE OF 1-35; 93-113; 125-150 AND 158-183</scope>
    <scope>FUNCTION</scope>
    <scope>CATALYTIC ACTIVITY</scope>
    <scope>BIOPHYSICOCHEMICAL PROPERTIES</scope>
    <scope>SUBUNIT</scope>
    <source>
        <strain>ATCC BAA-927 / DSM 2133 / JCM 14651 / NBRC 100331 / OCM 82 / Marburg</strain>
    </source>
</reference>
<reference key="3">
    <citation type="journal article" date="1993" name="J. Am. Chem. Soc.">
        <title>Biosynthesis of archaebacterial ether lipids. Formation of ether linkages by prenyltransferases.</title>
        <authorList>
            <person name="Zhang D."/>
            <person name="Poulter C.D."/>
        </authorList>
    </citation>
    <scope>FUNCTION</scope>
    <scope>CATALYTIC ACTIVITY</scope>
    <scope>SUBSTRATE SPECIFICITY</scope>
    <scope>COFACTOR</scope>
    <scope>ACTIVITY REGULATION</scope>
    <source>
        <strain>ATCC BAA-927 / DSM 2133 / JCM 14651 / NBRC 100331 / OCM 82 / Marburg</strain>
    </source>
</reference>
<reference key="4">
    <citation type="journal article" date="1993" name="J. Biol. Chem.">
        <title>(S)-geranylgeranylglyceryl phosphate synthase. Purification and characterization of the first pathway-specific enzyme in archaebacterial membrane lipid biosynthesis.</title>
        <authorList>
            <person name="Chen A."/>
            <person name="Zhang D."/>
            <person name="Poulter C.D."/>
        </authorList>
    </citation>
    <scope>FUNCTION</scope>
    <scope>COFACTOR</scope>
    <scope>SUBCELLULAR LOCATION</scope>
    <source>
        <strain>ATCC BAA-927 / DSM 2133 / JCM 14651 / NBRC 100331 / OCM 82 / Marburg</strain>
    </source>
</reference>
<accession>P0C882</accession>
<accession>D9PWD8</accession>
<evidence type="ECO:0000255" key="1">
    <source>
        <dbReference type="HAMAP-Rule" id="MF_00112"/>
    </source>
</evidence>
<evidence type="ECO:0000269" key="2">
    <source>
    </source>
</evidence>
<evidence type="ECO:0000269" key="3">
    <source>
    </source>
</evidence>
<evidence type="ECO:0000269" key="4">
    <source ref="3"/>
</evidence>
<evidence type="ECO:0000305" key="5"/>
<protein>
    <recommendedName>
        <fullName evidence="1">Geranylgeranylglyceryl phosphate synthase</fullName>
        <shortName evidence="1">GGGP synthase</shortName>
        <shortName evidence="1">GGGPS</shortName>
        <ecNumber evidence="1 2 4">2.5.1.41</ecNumber>
    </recommendedName>
    <alternativeName>
        <fullName evidence="1">(S)-3-O-geranylgeranylglyceryl phosphate synthase</fullName>
    </alternativeName>
    <alternativeName>
        <fullName evidence="1">Phosphoglycerol geranylgeranyltransferase</fullName>
    </alternativeName>
</protein>
<name>GGGPS_METTM</name>